<keyword id="KW-1003">Cell membrane</keyword>
<keyword id="KW-0297">G-protein coupled receptor</keyword>
<keyword id="KW-0325">Glycoprotein</keyword>
<keyword id="KW-0472">Membrane</keyword>
<keyword id="KW-0675">Receptor</keyword>
<keyword id="KW-1185">Reference proteome</keyword>
<keyword id="KW-0807">Transducer</keyword>
<keyword id="KW-0812">Transmembrane</keyword>
<keyword id="KW-1133">Transmembrane helix</keyword>
<protein>
    <recommendedName>
        <fullName>Mas-related G-protein coupled receptor member H</fullName>
    </recommendedName>
    <alternativeName>
        <fullName>G-protein coupled receptor 90</fullName>
    </alternativeName>
</protein>
<accession>Q99MT8</accession>
<accession>Q149S2</accession>
<dbReference type="EMBL" id="AF295365">
    <property type="protein sequence ID" value="AAK01865.1"/>
    <property type="molecule type" value="mRNA"/>
</dbReference>
<dbReference type="EMBL" id="BC116696">
    <property type="protein sequence ID" value="AAI16697.1"/>
    <property type="molecule type" value="mRNA"/>
</dbReference>
<dbReference type="EMBL" id="BC117525">
    <property type="protein sequence ID" value="AAI17526.1"/>
    <property type="molecule type" value="mRNA"/>
</dbReference>
<dbReference type="CCDS" id="CCDS28395.1"/>
<dbReference type="RefSeq" id="NP_109651.1">
    <property type="nucleotide sequence ID" value="NM_030726.1"/>
</dbReference>
<dbReference type="SMR" id="Q99MT8"/>
<dbReference type="FunCoup" id="Q99MT8">
    <property type="interactions" value="33"/>
</dbReference>
<dbReference type="STRING" id="10090.ENSMUSP00000074768"/>
<dbReference type="GlyCosmos" id="Q99MT8">
    <property type="glycosylation" value="2 sites, No reported glycans"/>
</dbReference>
<dbReference type="GlyGen" id="Q99MT8">
    <property type="glycosylation" value="2 sites"/>
</dbReference>
<dbReference type="PaxDb" id="10090-ENSMUSP00000074768"/>
<dbReference type="ProteomicsDB" id="291406"/>
<dbReference type="DNASU" id="80978"/>
<dbReference type="Ensembl" id="ENSMUST00000075296.4">
    <property type="protein sequence ID" value="ENSMUSP00000074768.3"/>
    <property type="gene ID" value="ENSMUSG00000059408.4"/>
</dbReference>
<dbReference type="GeneID" id="80978"/>
<dbReference type="KEGG" id="mmu:80978"/>
<dbReference type="UCSC" id="uc008alg.1">
    <property type="organism name" value="mouse"/>
</dbReference>
<dbReference type="AGR" id="MGI:1934134"/>
<dbReference type="CTD" id="80978"/>
<dbReference type="MGI" id="MGI:1934134">
    <property type="gene designation" value="Mrgprh"/>
</dbReference>
<dbReference type="VEuPathDB" id="HostDB:ENSMUSG00000059408"/>
<dbReference type="eggNOG" id="ENOG502RTWA">
    <property type="taxonomic scope" value="Eukaryota"/>
</dbReference>
<dbReference type="GeneTree" id="ENSGT01030000234639"/>
<dbReference type="HOGENOM" id="CLU_009579_4_1_1"/>
<dbReference type="InParanoid" id="Q99MT8"/>
<dbReference type="OMA" id="GLENFFC"/>
<dbReference type="OrthoDB" id="9631784at2759"/>
<dbReference type="PhylomeDB" id="Q99MT8"/>
<dbReference type="TreeFam" id="TF336336"/>
<dbReference type="BioGRID-ORCS" id="80978">
    <property type="hits" value="4 hits in 76 CRISPR screens"/>
</dbReference>
<dbReference type="PRO" id="PR:Q99MT8"/>
<dbReference type="Proteomes" id="UP000000589">
    <property type="component" value="Chromosome 17"/>
</dbReference>
<dbReference type="RNAct" id="Q99MT8">
    <property type="molecule type" value="protein"/>
</dbReference>
<dbReference type="Bgee" id="ENSMUSG00000059408">
    <property type="expression patterns" value="Expressed in hindlimb stylopod muscle and 8 other cell types or tissues"/>
</dbReference>
<dbReference type="ExpressionAtlas" id="Q99MT8">
    <property type="expression patterns" value="baseline and differential"/>
</dbReference>
<dbReference type="GO" id="GO:0005886">
    <property type="term" value="C:plasma membrane"/>
    <property type="evidence" value="ECO:0007669"/>
    <property type="project" value="UniProtKB-SubCell"/>
</dbReference>
<dbReference type="GO" id="GO:0004930">
    <property type="term" value="F:G protein-coupled receptor activity"/>
    <property type="evidence" value="ECO:0007669"/>
    <property type="project" value="UniProtKB-KW"/>
</dbReference>
<dbReference type="CDD" id="cd15110">
    <property type="entry name" value="7tmA_MrgprH"/>
    <property type="match status" value="1"/>
</dbReference>
<dbReference type="FunFam" id="1.20.1070.10:FF:000134">
    <property type="entry name" value="proto-oncogene Mas"/>
    <property type="match status" value="1"/>
</dbReference>
<dbReference type="Gene3D" id="1.20.1070.10">
    <property type="entry name" value="Rhodopsin 7-helix transmembrane proteins"/>
    <property type="match status" value="1"/>
</dbReference>
<dbReference type="InterPro" id="IPR000276">
    <property type="entry name" value="GPCR_Rhodpsn"/>
</dbReference>
<dbReference type="InterPro" id="IPR017452">
    <property type="entry name" value="GPCR_Rhodpsn_7TM"/>
</dbReference>
<dbReference type="InterPro" id="IPR026234">
    <property type="entry name" value="MRGPCRFAMILY"/>
</dbReference>
<dbReference type="InterPro" id="IPR026221">
    <property type="entry name" value="MRGPCRH"/>
</dbReference>
<dbReference type="PANTHER" id="PTHR11334">
    <property type="entry name" value="MAS-RELATED G-PROTEIN COUPLED RECEPTOR"/>
    <property type="match status" value="1"/>
</dbReference>
<dbReference type="PANTHER" id="PTHR11334:SF60">
    <property type="entry name" value="MAS-RELATED G-PROTEIN COUPLED RECEPTOR MEMBER H"/>
    <property type="match status" value="1"/>
</dbReference>
<dbReference type="Pfam" id="PF00001">
    <property type="entry name" value="7tm_1"/>
    <property type="match status" value="1"/>
</dbReference>
<dbReference type="PRINTS" id="PR00237">
    <property type="entry name" value="GPCRRHODOPSN"/>
</dbReference>
<dbReference type="PRINTS" id="PR02108">
    <property type="entry name" value="MRGPCRFAMILY"/>
</dbReference>
<dbReference type="PRINTS" id="PR02113">
    <property type="entry name" value="MRGPCRH"/>
</dbReference>
<dbReference type="SUPFAM" id="SSF81321">
    <property type="entry name" value="Family A G protein-coupled receptor-like"/>
    <property type="match status" value="1"/>
</dbReference>
<dbReference type="PROSITE" id="PS00237">
    <property type="entry name" value="G_PROTEIN_RECEP_F1_1"/>
    <property type="match status" value="1"/>
</dbReference>
<dbReference type="PROSITE" id="PS50262">
    <property type="entry name" value="G_PROTEIN_RECEP_F1_2"/>
    <property type="match status" value="1"/>
</dbReference>
<sequence length="321" mass="36911">MEPLAMTLYPLESTQPTRNKTPNETTWSSEHTDDHTYFLVSLVICSLGLAGNGLLIWFLIFCIKRKPFTIYILHLAIADFMVLLCSSIMKLVNTFHIYNMTLESYAILFMIFGYNTGLHLLTAISVERCLSVLYPIWYQCQRPKHQSAVACMLLWALSVLVSGLENFFCILEVKPQFPECRYVYIFSCILTFLVFVPLMIFSNLILFIQVCCNLKPRQPTKLYVIIMTTVILFLVFAMPMKVLLIIGYYSSSLDDSVWDSLPYLNMLSTINCSINPIVYFVVGSLRRKRSRKSLKEALQKVFEEKPVVASRENVTQFSLPS</sequence>
<evidence type="ECO:0000250" key="1"/>
<evidence type="ECO:0000255" key="2"/>
<evidence type="ECO:0000255" key="3">
    <source>
        <dbReference type="PROSITE-ProRule" id="PRU00521"/>
    </source>
</evidence>
<organism>
    <name type="scientific">Mus musculus</name>
    <name type="common">Mouse</name>
    <dbReference type="NCBI Taxonomy" id="10090"/>
    <lineage>
        <taxon>Eukaryota</taxon>
        <taxon>Metazoa</taxon>
        <taxon>Chordata</taxon>
        <taxon>Craniata</taxon>
        <taxon>Vertebrata</taxon>
        <taxon>Euteleostomi</taxon>
        <taxon>Mammalia</taxon>
        <taxon>Eutheria</taxon>
        <taxon>Euarchontoglires</taxon>
        <taxon>Glires</taxon>
        <taxon>Rodentia</taxon>
        <taxon>Myomorpha</taxon>
        <taxon>Muroidea</taxon>
        <taxon>Muridae</taxon>
        <taxon>Murinae</taxon>
        <taxon>Mus</taxon>
        <taxon>Mus</taxon>
    </lineage>
</organism>
<feature type="chain" id="PRO_0000069770" description="Mas-related G-protein coupled receptor member H">
    <location>
        <begin position="1"/>
        <end position="321"/>
    </location>
</feature>
<feature type="topological domain" description="Extracellular" evidence="2">
    <location>
        <begin position="1"/>
        <end position="35"/>
    </location>
</feature>
<feature type="transmembrane region" description="Helical; Name=1" evidence="2">
    <location>
        <begin position="36"/>
        <end position="56"/>
    </location>
</feature>
<feature type="topological domain" description="Cytoplasmic" evidence="2">
    <location>
        <begin position="57"/>
        <end position="71"/>
    </location>
</feature>
<feature type="transmembrane region" description="Helical; Name=2" evidence="2">
    <location>
        <begin position="72"/>
        <end position="92"/>
    </location>
</feature>
<feature type="topological domain" description="Extracellular" evidence="2">
    <location>
        <begin position="93"/>
        <end position="102"/>
    </location>
</feature>
<feature type="transmembrane region" description="Helical; Name=3" evidence="2">
    <location>
        <begin position="103"/>
        <end position="126"/>
    </location>
</feature>
<feature type="topological domain" description="Cytoplasmic" evidence="2">
    <location>
        <begin position="127"/>
        <end position="147"/>
    </location>
</feature>
<feature type="transmembrane region" description="Helical; Name=4" evidence="2">
    <location>
        <begin position="148"/>
        <end position="168"/>
    </location>
</feature>
<feature type="topological domain" description="Extracellular" evidence="2">
    <location>
        <begin position="169"/>
        <end position="188"/>
    </location>
</feature>
<feature type="transmembrane region" description="Helical; Name=5" evidence="2">
    <location>
        <begin position="189"/>
        <end position="209"/>
    </location>
</feature>
<feature type="topological domain" description="Cytoplasmic" evidence="2">
    <location>
        <begin position="210"/>
        <end position="225"/>
    </location>
</feature>
<feature type="transmembrane region" description="Helical; Name=6" evidence="2">
    <location>
        <begin position="226"/>
        <end position="246"/>
    </location>
</feature>
<feature type="topological domain" description="Extracellular" evidence="2">
    <location>
        <position position="247"/>
    </location>
</feature>
<feature type="transmembrane region" description="Helical; Name=7" evidence="2">
    <location>
        <begin position="248"/>
        <end position="271"/>
    </location>
</feature>
<feature type="topological domain" description="Cytoplasmic" evidence="2">
    <location>
        <begin position="272"/>
        <end position="320"/>
    </location>
</feature>
<feature type="glycosylation site" description="N-linked (GlcNAc...) asparagine" evidence="2">
    <location>
        <position position="23"/>
    </location>
</feature>
<feature type="glycosylation site" description="N-linked (GlcNAc...) asparagine" evidence="2">
    <location>
        <position position="99"/>
    </location>
</feature>
<gene>
    <name type="primary">Mrgprh</name>
    <name type="synonym">Gpr90</name>
    <name type="synonym">Mrgh</name>
</gene>
<name>MRGRH_MOUSE</name>
<reference key="1">
    <citation type="journal article" date="2001" name="J. Mol. Biol.">
        <title>An expressed sequence tag (EST) data mining strategy succeeding in the discovery of new G-protein coupled receptors.</title>
        <authorList>
            <person name="Wittenberger T."/>
            <person name="Schaller H.C."/>
            <person name="Hellebrand S."/>
        </authorList>
    </citation>
    <scope>NUCLEOTIDE SEQUENCE [MRNA]</scope>
</reference>
<reference key="2">
    <citation type="journal article" date="2004" name="Genome Res.">
        <title>The status, quality, and expansion of the NIH full-length cDNA project: the Mammalian Gene Collection (MGC).</title>
        <authorList>
            <consortium name="The MGC Project Team"/>
        </authorList>
    </citation>
    <scope>NUCLEOTIDE SEQUENCE [LARGE SCALE MRNA]</scope>
</reference>
<proteinExistence type="evidence at transcript level"/>
<comment type="function">
    <text evidence="1">Orphan receptor. May regulate nociceptor function and/or development, including the sensation or modulation of pain (By similarity).</text>
</comment>
<comment type="subcellular location">
    <subcellularLocation>
        <location>Cell membrane</location>
        <topology>Multi-pass membrane protein</topology>
    </subcellularLocation>
</comment>
<comment type="similarity">
    <text evidence="3">Belongs to the G-protein coupled receptor 1 family. Mas subfamily.</text>
</comment>